<accession>O55145</accession>
<dbReference type="EMBL" id="AF030358">
    <property type="protein sequence ID" value="AAC33834.2"/>
    <property type="molecule type" value="mRNA"/>
</dbReference>
<dbReference type="EMBL" id="Y16813">
    <property type="protein sequence ID" value="CAA76404.1"/>
    <property type="molecule type" value="mRNA"/>
</dbReference>
<dbReference type="RefSeq" id="NP_604450.1">
    <property type="nucleotide sequence ID" value="NM_134455.1"/>
</dbReference>
<dbReference type="SMR" id="O55145"/>
<dbReference type="BioGRID" id="250131">
    <property type="interactions" value="1"/>
</dbReference>
<dbReference type="FunCoup" id="O55145">
    <property type="interactions" value="584"/>
</dbReference>
<dbReference type="STRING" id="10116.ENSRNOP00000022128"/>
<dbReference type="GlyCosmos" id="O55145">
    <property type="glycosylation" value="1 site, No reported glycans"/>
</dbReference>
<dbReference type="GlyGen" id="O55145">
    <property type="glycosylation" value="2 sites"/>
</dbReference>
<dbReference type="PhosphoSitePlus" id="O55145"/>
<dbReference type="SwissPalm" id="O55145"/>
<dbReference type="PaxDb" id="10116-ENSRNOP00000022128"/>
<dbReference type="GeneID" id="89808"/>
<dbReference type="KEGG" id="rno:89808"/>
<dbReference type="UCSC" id="RGD:620458">
    <property type="organism name" value="rat"/>
</dbReference>
<dbReference type="AGR" id="RGD:620458"/>
<dbReference type="CTD" id="6376"/>
<dbReference type="RGD" id="620458">
    <property type="gene designation" value="Cx3cl1"/>
</dbReference>
<dbReference type="eggNOG" id="ENOG502SNIE">
    <property type="taxonomic scope" value="Eukaryota"/>
</dbReference>
<dbReference type="InParanoid" id="O55145"/>
<dbReference type="PhylomeDB" id="O55145"/>
<dbReference type="Reactome" id="R-RNO-380108">
    <property type="pathway name" value="Chemokine receptors bind chemokines"/>
</dbReference>
<dbReference type="Reactome" id="R-RNO-418594">
    <property type="pathway name" value="G alpha (i) signalling events"/>
</dbReference>
<dbReference type="PRO" id="PR:O55145"/>
<dbReference type="Proteomes" id="UP000002494">
    <property type="component" value="Unplaced"/>
</dbReference>
<dbReference type="GO" id="GO:0044297">
    <property type="term" value="C:cell body"/>
    <property type="evidence" value="ECO:0000266"/>
    <property type="project" value="RGD"/>
</dbReference>
<dbReference type="GO" id="GO:0042995">
    <property type="term" value="C:cell projection"/>
    <property type="evidence" value="ECO:0000314"/>
    <property type="project" value="ARUK-UCL"/>
</dbReference>
<dbReference type="GO" id="GO:0009986">
    <property type="term" value="C:cell surface"/>
    <property type="evidence" value="ECO:0000266"/>
    <property type="project" value="RGD"/>
</dbReference>
<dbReference type="GO" id="GO:0005576">
    <property type="term" value="C:extracellular region"/>
    <property type="evidence" value="ECO:0000314"/>
    <property type="project" value="ARUK-UCL"/>
</dbReference>
<dbReference type="GO" id="GO:0005615">
    <property type="term" value="C:extracellular space"/>
    <property type="evidence" value="ECO:0000318"/>
    <property type="project" value="GO_Central"/>
</dbReference>
<dbReference type="GO" id="GO:0016020">
    <property type="term" value="C:membrane"/>
    <property type="evidence" value="ECO:0000314"/>
    <property type="project" value="ARUK-UCL"/>
</dbReference>
<dbReference type="GO" id="GO:0043005">
    <property type="term" value="C:neuron projection"/>
    <property type="evidence" value="ECO:0000314"/>
    <property type="project" value="ARUK-UCL"/>
</dbReference>
<dbReference type="GO" id="GO:0043025">
    <property type="term" value="C:neuronal cell body"/>
    <property type="evidence" value="ECO:0000314"/>
    <property type="project" value="ARUK-UCL"/>
</dbReference>
<dbReference type="GO" id="GO:0048471">
    <property type="term" value="C:perinuclear region of cytoplasm"/>
    <property type="evidence" value="ECO:0000314"/>
    <property type="project" value="ARUK-UCL"/>
</dbReference>
<dbReference type="GO" id="GO:0005886">
    <property type="term" value="C:plasma membrane"/>
    <property type="evidence" value="ECO:0000250"/>
    <property type="project" value="UniProtKB"/>
</dbReference>
<dbReference type="GO" id="GO:0098794">
    <property type="term" value="C:postsynapse"/>
    <property type="evidence" value="ECO:0007669"/>
    <property type="project" value="GOC"/>
</dbReference>
<dbReference type="GO" id="GO:0048020">
    <property type="term" value="F:CCR chemokine receptor binding"/>
    <property type="evidence" value="ECO:0000318"/>
    <property type="project" value="GO_Central"/>
</dbReference>
<dbReference type="GO" id="GO:0042056">
    <property type="term" value="F:chemoattractant activity"/>
    <property type="evidence" value="ECO:0000266"/>
    <property type="project" value="RGD"/>
</dbReference>
<dbReference type="GO" id="GO:0008009">
    <property type="term" value="F:chemokine activity"/>
    <property type="evidence" value="ECO:0000314"/>
    <property type="project" value="RGD"/>
</dbReference>
<dbReference type="GO" id="GO:0031737">
    <property type="term" value="F:CX3C chemokine receptor binding"/>
    <property type="evidence" value="ECO:0000250"/>
    <property type="project" value="UniProtKB"/>
</dbReference>
<dbReference type="GO" id="GO:0045237">
    <property type="term" value="F:CXCR1 chemokine receptor binding"/>
    <property type="evidence" value="ECO:0000266"/>
    <property type="project" value="RGD"/>
</dbReference>
<dbReference type="GO" id="GO:0005178">
    <property type="term" value="F:integrin binding"/>
    <property type="evidence" value="ECO:0000250"/>
    <property type="project" value="UniProtKB"/>
</dbReference>
<dbReference type="GO" id="GO:0060055">
    <property type="term" value="P:angiogenesis involved in wound healing"/>
    <property type="evidence" value="ECO:0000266"/>
    <property type="project" value="RGD"/>
</dbReference>
<dbReference type="GO" id="GO:0061844">
    <property type="term" value="P:antimicrobial humoral immune response mediated by antimicrobial peptide"/>
    <property type="evidence" value="ECO:0000318"/>
    <property type="project" value="GO_Central"/>
</dbReference>
<dbReference type="GO" id="GO:0035425">
    <property type="term" value="P:autocrine signaling"/>
    <property type="evidence" value="ECO:0000316"/>
    <property type="project" value="ARUK-UCL"/>
</dbReference>
<dbReference type="GO" id="GO:0007155">
    <property type="term" value="P:cell adhesion"/>
    <property type="evidence" value="ECO:0000266"/>
    <property type="project" value="RGD"/>
</dbReference>
<dbReference type="GO" id="GO:0060326">
    <property type="term" value="P:cell chemotaxis"/>
    <property type="evidence" value="ECO:0000266"/>
    <property type="project" value="RGD"/>
</dbReference>
<dbReference type="GO" id="GO:0098609">
    <property type="term" value="P:cell-cell adhesion"/>
    <property type="evidence" value="ECO:0000314"/>
    <property type="project" value="ARUK-UCL"/>
</dbReference>
<dbReference type="GO" id="GO:0071356">
    <property type="term" value="P:cellular response to tumor necrosis factor"/>
    <property type="evidence" value="ECO:0000314"/>
    <property type="project" value="ARUK-UCL"/>
</dbReference>
<dbReference type="GO" id="GO:0070098">
    <property type="term" value="P:chemokine-mediated signaling pathway"/>
    <property type="evidence" value="ECO:0000316"/>
    <property type="project" value="ARUK-UCL"/>
</dbReference>
<dbReference type="GO" id="GO:0006935">
    <property type="term" value="P:chemotaxis"/>
    <property type="evidence" value="ECO:0000314"/>
    <property type="project" value="RGD"/>
</dbReference>
<dbReference type="GO" id="GO:0019221">
    <property type="term" value="P:cytokine-mediated signaling pathway"/>
    <property type="evidence" value="ECO:0000266"/>
    <property type="project" value="RGD"/>
</dbReference>
<dbReference type="GO" id="GO:0048245">
    <property type="term" value="P:eosinophil chemotaxis"/>
    <property type="evidence" value="ECO:0000318"/>
    <property type="project" value="GO_Central"/>
</dbReference>
<dbReference type="GO" id="GO:0097192">
    <property type="term" value="P:extrinsic apoptotic signaling pathway in absence of ligand"/>
    <property type="evidence" value="ECO:0000266"/>
    <property type="project" value="RGD"/>
</dbReference>
<dbReference type="GO" id="GO:0007186">
    <property type="term" value="P:G protein-coupled receptor signaling pathway"/>
    <property type="evidence" value="ECO:0000316"/>
    <property type="project" value="ARUK-UCL"/>
</dbReference>
<dbReference type="GO" id="GO:0006954">
    <property type="term" value="P:inflammatory response"/>
    <property type="evidence" value="ECO:0000318"/>
    <property type="project" value="GO_Central"/>
</dbReference>
<dbReference type="GO" id="GO:0060080">
    <property type="term" value="P:inhibitory postsynaptic potential"/>
    <property type="evidence" value="ECO:0000315"/>
    <property type="project" value="RGD"/>
</dbReference>
<dbReference type="GO" id="GO:0033622">
    <property type="term" value="P:integrin activation"/>
    <property type="evidence" value="ECO:0000250"/>
    <property type="project" value="UniProtKB"/>
</dbReference>
<dbReference type="GO" id="GO:0002523">
    <property type="term" value="P:leukocyte migration involved in inflammatory response"/>
    <property type="evidence" value="ECO:0000250"/>
    <property type="project" value="UniProtKB"/>
</dbReference>
<dbReference type="GO" id="GO:0048247">
    <property type="term" value="P:lymphocyte chemotaxis"/>
    <property type="evidence" value="ECO:0000266"/>
    <property type="project" value="RGD"/>
</dbReference>
<dbReference type="GO" id="GO:0001774">
    <property type="term" value="P:microglial cell activation"/>
    <property type="evidence" value="ECO:0000314"/>
    <property type="project" value="ARUK-UCL"/>
</dbReference>
<dbReference type="GO" id="GO:0061518">
    <property type="term" value="P:microglial cell proliferation"/>
    <property type="evidence" value="ECO:0000266"/>
    <property type="project" value="RGD"/>
</dbReference>
<dbReference type="GO" id="GO:0043066">
    <property type="term" value="P:negative regulation of apoptotic process"/>
    <property type="evidence" value="ECO:0000266"/>
    <property type="project" value="RGD"/>
</dbReference>
<dbReference type="GO" id="GO:2001234">
    <property type="term" value="P:negative regulation of apoptotic signaling pathway"/>
    <property type="evidence" value="ECO:0000266"/>
    <property type="project" value="RGD"/>
</dbReference>
<dbReference type="GO" id="GO:0030336">
    <property type="term" value="P:negative regulation of cell migration"/>
    <property type="evidence" value="ECO:0000266"/>
    <property type="project" value="RGD"/>
</dbReference>
<dbReference type="GO" id="GO:2001240">
    <property type="term" value="P:negative regulation of extrinsic apoptotic signaling pathway in absence of ligand"/>
    <property type="evidence" value="ECO:0000266"/>
    <property type="project" value="RGD"/>
</dbReference>
<dbReference type="GO" id="GO:1900450">
    <property type="term" value="P:negative regulation of glutamate receptor signaling pathway"/>
    <property type="evidence" value="ECO:0000314"/>
    <property type="project" value="ARUK-UCL"/>
</dbReference>
<dbReference type="GO" id="GO:0110091">
    <property type="term" value="P:negative regulation of hippocampal neuron apoptotic process"/>
    <property type="evidence" value="ECO:0000266"/>
    <property type="project" value="RGD"/>
</dbReference>
<dbReference type="GO" id="GO:0032690">
    <property type="term" value="P:negative regulation of interleukin-1 alpha production"/>
    <property type="evidence" value="ECO:0000314"/>
    <property type="project" value="ARUK-UCL"/>
</dbReference>
<dbReference type="GO" id="GO:1903979">
    <property type="term" value="P:negative regulation of microglial cell activation"/>
    <property type="evidence" value="ECO:0000314"/>
    <property type="project" value="ARUK-UCL"/>
</dbReference>
<dbReference type="GO" id="GO:0032720">
    <property type="term" value="P:negative regulation of tumor necrosis factor production"/>
    <property type="evidence" value="ECO:0000266"/>
    <property type="project" value="RGD"/>
</dbReference>
<dbReference type="GO" id="GO:0045906">
    <property type="term" value="P:negative regulation of vasoconstriction"/>
    <property type="evidence" value="ECO:0000314"/>
    <property type="project" value="RGD"/>
</dbReference>
<dbReference type="GO" id="GO:0070050">
    <property type="term" value="P:neuron cellular homeostasis"/>
    <property type="evidence" value="ECO:0000314"/>
    <property type="project" value="ARUK-UCL"/>
</dbReference>
<dbReference type="GO" id="GO:0030593">
    <property type="term" value="P:neutrophil chemotaxis"/>
    <property type="evidence" value="ECO:0000266"/>
    <property type="project" value="RGD"/>
</dbReference>
<dbReference type="GO" id="GO:0050918">
    <property type="term" value="P:positive chemotaxis"/>
    <property type="evidence" value="ECO:0000266"/>
    <property type="project" value="RGD"/>
</dbReference>
<dbReference type="GO" id="GO:0032233">
    <property type="term" value="P:positive regulation of actin filament bundle assembly"/>
    <property type="evidence" value="ECO:0000266"/>
    <property type="project" value="RGD"/>
</dbReference>
<dbReference type="GO" id="GO:0051041">
    <property type="term" value="P:positive regulation of calcium-independent cell-cell adhesion"/>
    <property type="evidence" value="ECO:0000266"/>
    <property type="project" value="RGD"/>
</dbReference>
<dbReference type="GO" id="GO:0043123">
    <property type="term" value="P:positive regulation of canonical NF-kappaB signal transduction"/>
    <property type="evidence" value="ECO:0000316"/>
    <property type="project" value="ARUK-UCL"/>
</dbReference>
<dbReference type="GO" id="GO:0045785">
    <property type="term" value="P:positive regulation of cell adhesion"/>
    <property type="evidence" value="ECO:0000314"/>
    <property type="project" value="RGD"/>
</dbReference>
<dbReference type="GO" id="GO:0030335">
    <property type="term" value="P:positive regulation of cell migration"/>
    <property type="evidence" value="ECO:0000314"/>
    <property type="project" value="RGD"/>
</dbReference>
<dbReference type="GO" id="GO:0008284">
    <property type="term" value="P:positive regulation of cell population proliferation"/>
    <property type="evidence" value="ECO:0000266"/>
    <property type="project" value="RGD"/>
</dbReference>
<dbReference type="GO" id="GO:0050729">
    <property type="term" value="P:positive regulation of inflammatory response"/>
    <property type="evidence" value="ECO:0000266"/>
    <property type="project" value="RGD"/>
</dbReference>
<dbReference type="GO" id="GO:0010759">
    <property type="term" value="P:positive regulation of macrophage chemotaxis"/>
    <property type="evidence" value="ECO:0000315"/>
    <property type="project" value="RGD"/>
</dbReference>
<dbReference type="GO" id="GO:0043410">
    <property type="term" value="P:positive regulation of MAPK cascade"/>
    <property type="evidence" value="ECO:0000266"/>
    <property type="project" value="RGD"/>
</dbReference>
<dbReference type="GO" id="GO:1904141">
    <property type="term" value="P:positive regulation of microglial cell migration"/>
    <property type="evidence" value="ECO:0000266"/>
    <property type="project" value="RGD"/>
</dbReference>
<dbReference type="GO" id="GO:0002052">
    <property type="term" value="P:positive regulation of neuroblast proliferation"/>
    <property type="evidence" value="ECO:0000314"/>
    <property type="project" value="RGD"/>
</dbReference>
<dbReference type="GO" id="GO:0010976">
    <property type="term" value="P:positive regulation of neuron projection development"/>
    <property type="evidence" value="ECO:0000314"/>
    <property type="project" value="ParkinsonsUK-UCL"/>
</dbReference>
<dbReference type="GO" id="GO:0051897">
    <property type="term" value="P:positive regulation of phosphatidylinositol 3-kinase/protein kinase B signal transduction"/>
    <property type="evidence" value="ECO:0000315"/>
    <property type="project" value="ARUK-UCL"/>
</dbReference>
<dbReference type="GO" id="GO:0051281">
    <property type="term" value="P:positive regulation of release of sequestered calcium ion into cytosol"/>
    <property type="evidence" value="ECO:0000266"/>
    <property type="project" value="RGD"/>
</dbReference>
<dbReference type="GO" id="GO:0048661">
    <property type="term" value="P:positive regulation of smooth muscle cell proliferation"/>
    <property type="evidence" value="ECO:0000314"/>
    <property type="project" value="ARUK-UCL"/>
</dbReference>
<dbReference type="GO" id="GO:0045944">
    <property type="term" value="P:positive regulation of transcription by RNA polymerase II"/>
    <property type="evidence" value="ECO:0000314"/>
    <property type="project" value="ARUK-UCL"/>
</dbReference>
<dbReference type="GO" id="GO:0032914">
    <property type="term" value="P:positive regulation of transforming growth factor beta1 production"/>
    <property type="evidence" value="ECO:0000266"/>
    <property type="project" value="RGD"/>
</dbReference>
<dbReference type="GO" id="GO:0031664">
    <property type="term" value="P:regulation of lipopolysaccharide-mediated signaling pathway"/>
    <property type="evidence" value="ECO:0000266"/>
    <property type="project" value="RGD"/>
</dbReference>
<dbReference type="GO" id="GO:0001666">
    <property type="term" value="P:response to hypoxia"/>
    <property type="evidence" value="ECO:0000270"/>
    <property type="project" value="RGD"/>
</dbReference>
<dbReference type="GO" id="GO:0002931">
    <property type="term" value="P:response to ischemia"/>
    <property type="evidence" value="ECO:0000316"/>
    <property type="project" value="ARUK-UCL"/>
</dbReference>
<dbReference type="GO" id="GO:0042060">
    <property type="term" value="P:wound healing"/>
    <property type="evidence" value="ECO:0000266"/>
    <property type="project" value="RGD"/>
</dbReference>
<dbReference type="CDD" id="cd00274">
    <property type="entry name" value="Chemokine_CX3C"/>
    <property type="match status" value="1"/>
</dbReference>
<dbReference type="FunFam" id="2.40.50.40:FF:000012">
    <property type="entry name" value="C-C motif chemokine"/>
    <property type="match status" value="1"/>
</dbReference>
<dbReference type="Gene3D" id="2.40.50.40">
    <property type="match status" value="1"/>
</dbReference>
<dbReference type="InterPro" id="IPR039809">
    <property type="entry name" value="Chemokine_b/g/d"/>
</dbReference>
<dbReference type="InterPro" id="IPR034127">
    <property type="entry name" value="Chemokine_CX3C"/>
</dbReference>
<dbReference type="InterPro" id="IPR001811">
    <property type="entry name" value="Chemokine_IL8-like_dom"/>
</dbReference>
<dbReference type="InterPro" id="IPR036048">
    <property type="entry name" value="Interleukin_8-like_sf"/>
</dbReference>
<dbReference type="PANTHER" id="PTHR12015:SF92">
    <property type="entry name" value="FRACTALKINE"/>
    <property type="match status" value="1"/>
</dbReference>
<dbReference type="PANTHER" id="PTHR12015">
    <property type="entry name" value="SMALL INDUCIBLE CYTOKINE A"/>
    <property type="match status" value="1"/>
</dbReference>
<dbReference type="Pfam" id="PF00048">
    <property type="entry name" value="IL8"/>
    <property type="match status" value="1"/>
</dbReference>
<dbReference type="PRINTS" id="PR01721">
    <property type="entry name" value="FRACTALKINE"/>
</dbReference>
<dbReference type="SMART" id="SM00199">
    <property type="entry name" value="SCY"/>
    <property type="match status" value="1"/>
</dbReference>
<dbReference type="SUPFAM" id="SSF54117">
    <property type="entry name" value="Interleukin 8-like chemokines"/>
    <property type="match status" value="1"/>
</dbReference>
<feature type="signal peptide" evidence="2">
    <location>
        <begin position="1"/>
        <end position="24"/>
    </location>
</feature>
<feature type="chain" id="PRO_0000005254" description="Fractalkine">
    <location>
        <begin position="25"/>
        <end position="393"/>
    </location>
</feature>
<feature type="chain" id="PRO_0000296226" description="Processed fractalkine">
    <location>
        <begin position="25"/>
        <end position="335" status="uncertain"/>
    </location>
</feature>
<feature type="topological domain" description="Extracellular" evidence="2">
    <location>
        <begin position="25"/>
        <end position="337"/>
    </location>
</feature>
<feature type="transmembrane region" description="Helical" evidence="2">
    <location>
        <begin position="338"/>
        <end position="358"/>
    </location>
</feature>
<feature type="topological domain" description="Cytoplasmic" evidence="2">
    <location>
        <begin position="359"/>
        <end position="393"/>
    </location>
</feature>
<feature type="region of interest" description="Chemokine and involved in interaction with ITGAV:ITGB3 and ITGA4:ITGB1" evidence="1">
    <location>
        <begin position="25"/>
        <end position="100"/>
    </location>
</feature>
<feature type="region of interest" description="Mucin-like stalk">
    <location>
        <begin position="101"/>
        <end position="337"/>
    </location>
</feature>
<feature type="region of interest" description="Disordered" evidence="3">
    <location>
        <begin position="114"/>
        <end position="184"/>
    </location>
</feature>
<feature type="region of interest" description="Disordered" evidence="3">
    <location>
        <begin position="213"/>
        <end position="303"/>
    </location>
</feature>
<feature type="compositionally biased region" description="Polar residues" evidence="3">
    <location>
        <begin position="153"/>
        <end position="172"/>
    </location>
</feature>
<feature type="compositionally biased region" description="Polar residues" evidence="3">
    <location>
        <begin position="223"/>
        <end position="240"/>
    </location>
</feature>
<feature type="site" description="Cleavage; to produce soluble form" evidence="2">
    <location>
        <begin position="335"/>
        <end position="336"/>
    </location>
</feature>
<feature type="glycosylation site" description="N-linked (GlcNAc...) asparagine" evidence="2">
    <location>
        <position position="33"/>
    </location>
</feature>
<feature type="disulfide bond" evidence="1">
    <location>
        <begin position="32"/>
        <end position="58"/>
    </location>
</feature>
<feature type="disulfide bond" evidence="1">
    <location>
        <begin position="36"/>
        <end position="74"/>
    </location>
</feature>
<name>X3CL1_RAT</name>
<sequence length="393" mass="41977">MAPSQLAWLLRLAAFFHLCTLLAGQHLGMTKCNITCHKMTSPIPVTLLIHYQLNQESCGKRAIILETRQHRHFCADPKEKWVQDAMKHLDHQTAALTRNGGKFEKRVDNVTPRITSATRGLSPTALAKPESATVEDLTLEPTAISQEARRPMGTSQEPPAAVTGSSPSTSKAQDAGLAAKPQSTGISEVAAVSTTIWPSSAVYQSGSSLWAEEKATESPPTIALSTQASTTSSPKQNVGSEGQPPWVQEQDSTPEKSPGPEETNPVHTDIFQDRGPGSTVHPSVAPTSSEKTPSPELVASGSQAPKVEEPIHATADPQKLSVFITPVPDSQAATRRQAVGLLAFLGLLFCLGVAMFAYQSLQGCPRKMAGEMVEGLRYVPRSCGSNSYVLVPV</sequence>
<evidence type="ECO:0000250" key="1">
    <source>
        <dbReference type="UniProtKB" id="P78423"/>
    </source>
</evidence>
<evidence type="ECO:0000255" key="2"/>
<evidence type="ECO:0000256" key="3">
    <source>
        <dbReference type="SAM" id="MobiDB-lite"/>
    </source>
</evidence>
<evidence type="ECO:0000269" key="4">
    <source>
    </source>
</evidence>
<evidence type="ECO:0000269" key="5">
    <source>
    </source>
</evidence>
<evidence type="ECO:0000305" key="6"/>
<reference key="1">
    <citation type="journal article" date="1998" name="Proc. Natl. Acad. Sci. U.S.A.">
        <title>Role for neuronally derived fractalkine in mediating interactions between neurons and CX3CR1-expressing microglia.</title>
        <authorList>
            <person name="Harrison J.K."/>
            <person name="Jiang Y."/>
            <person name="Chen S."/>
            <person name="Xia Y."/>
            <person name="Maciejewski D."/>
            <person name="McNamara R.K."/>
            <person name="Streit W.J."/>
            <person name="Salafranca M.N."/>
            <person name="Adhikari S."/>
            <person name="Thompson D.A."/>
            <person name="Botti P."/>
            <person name="Bacon K.B."/>
            <person name="Feng L."/>
        </authorList>
    </citation>
    <scope>NUCLEOTIDE SEQUENCE [MRNA]</scope>
    <scope>TISSUE SPECIFICITY</scope>
    <source>
        <tissue>Brain</tissue>
    </source>
</reference>
<reference key="2">
    <citation type="submission" date="1999-05" db="EMBL/GenBank/DDBJ databases">
        <authorList>
            <person name="Feng L."/>
            <person name="Harrison J.K."/>
        </authorList>
    </citation>
    <scope>SEQUENCE REVISION TO 127-151</scope>
</reference>
<reference key="3">
    <citation type="journal article" date="1998" name="FEBS Lett.">
        <title>Neuronal expression of fractalkine in the presence and absence of inflammation.</title>
        <authorList>
            <person name="Schwaeble W.J."/>
            <person name="Stover C.M."/>
            <person name="Schall T.J."/>
            <person name="Dairaghi D.J."/>
            <person name="Trinder P.K.E."/>
            <person name="Linington C."/>
            <person name="Iglesias A."/>
            <person name="Schubart A."/>
            <person name="Lynch N.J."/>
            <person name="Weihe E."/>
            <person name="Schaefer M.K.-H."/>
        </authorList>
    </citation>
    <scope>NUCLEOTIDE SEQUENCE [MRNA] OF 204-335</scope>
    <scope>TISSUE SPECIFICITY</scope>
</reference>
<keyword id="KW-0130">Cell adhesion</keyword>
<keyword id="KW-1003">Cell membrane</keyword>
<keyword id="KW-0145">Chemotaxis</keyword>
<keyword id="KW-0202">Cytokine</keyword>
<keyword id="KW-1015">Disulfide bond</keyword>
<keyword id="KW-0325">Glycoprotein</keyword>
<keyword id="KW-0395">Inflammatory response</keyword>
<keyword id="KW-0472">Membrane</keyword>
<keyword id="KW-1185">Reference proteome</keyword>
<keyword id="KW-0964">Secreted</keyword>
<keyword id="KW-0732">Signal</keyword>
<keyword id="KW-0812">Transmembrane</keyword>
<keyword id="KW-1133">Transmembrane helix</keyword>
<comment type="function">
    <text evidence="1">Chemokine that acts as a ligand for both CX3CR1 and integrins ITGAV:ITGB3 and ITGA4:ITGB1. The CX3CR1-CX3CL1 signaling exerts distinct functions in different tissue compartments, such as immune response, inflammation, cell adhesion and chemotaxis. Regulates leukocyte adhesion and migration processes at the endothelium. Can activate integrins in both a CX3CR1-dependent and CX3CR1-independent manner. In the presence of CX3CR1, activates integrins by binding to the classical ligand-binding site (site 1) in integrins. In the absence of CX3CR1, binds to a second site (site 2) in integrins which is distinct from site 1 and enhances the binding of other integrin ligands to site 1.</text>
</comment>
<comment type="function">
    <molecule>Processed fractalkine</molecule>
    <text evidence="1">The soluble form is chemotactic for T-cells and monocytes, but not for neutrophils.</text>
</comment>
<comment type="function">
    <molecule>Fractalkine</molecule>
    <text evidence="1">The membrane-bound form promotes adhesion of those leukocytes to endothelial cells.</text>
</comment>
<comment type="subunit">
    <text evidence="1">Monomer. Forms a ternary complex with CX3CR1 and ITGAV:ITGB3 or ITGA4:ITGB1.</text>
</comment>
<comment type="subcellular location">
    <subcellularLocation>
        <location evidence="1">Cell membrane</location>
        <topology evidence="2">Single-pass type I membrane protein</topology>
    </subcellularLocation>
</comment>
<comment type="subcellular location">
    <molecule>Processed fractalkine</molecule>
    <subcellularLocation>
        <location evidence="1">Secreted</location>
    </subcellularLocation>
</comment>
<comment type="tissue specificity">
    <text evidence="4 5">Highest levels in brain (neurons). Significant levels in kidney, heart, lung and adrenal gland.</text>
</comment>
<comment type="PTM">
    <text evidence="1">A soluble short form may be released by proteolytic cleavage from the long membrane-anchored form.</text>
</comment>
<comment type="similarity">
    <text evidence="6">Belongs to the intercrine delta family.</text>
</comment>
<proteinExistence type="evidence at transcript level"/>
<organism>
    <name type="scientific">Rattus norvegicus</name>
    <name type="common">Rat</name>
    <dbReference type="NCBI Taxonomy" id="10116"/>
    <lineage>
        <taxon>Eukaryota</taxon>
        <taxon>Metazoa</taxon>
        <taxon>Chordata</taxon>
        <taxon>Craniata</taxon>
        <taxon>Vertebrata</taxon>
        <taxon>Euteleostomi</taxon>
        <taxon>Mammalia</taxon>
        <taxon>Eutheria</taxon>
        <taxon>Euarchontoglires</taxon>
        <taxon>Glires</taxon>
        <taxon>Rodentia</taxon>
        <taxon>Myomorpha</taxon>
        <taxon>Muroidea</taxon>
        <taxon>Muridae</taxon>
        <taxon>Murinae</taxon>
        <taxon>Rattus</taxon>
    </lineage>
</organism>
<gene>
    <name type="primary">Cx3cl1</name>
    <name type="synonym">Acc1</name>
    <name type="synonym">Fkn</name>
    <name type="synonym">Scyd1</name>
</gene>
<protein>
    <recommendedName>
        <fullName>Fractalkine</fullName>
    </recommendedName>
    <alternativeName>
        <fullName>C-X3-C motif chemokine 1</fullName>
    </alternativeName>
    <alternativeName>
        <fullName>CX3C membrane-anchored chemokine</fullName>
    </alternativeName>
    <alternativeName>
        <fullName>Neurotactin</fullName>
    </alternativeName>
    <alternativeName>
        <fullName>Small-inducible cytokine D1</fullName>
    </alternativeName>
    <component>
        <recommendedName>
            <fullName>Processed fractalkine</fullName>
        </recommendedName>
    </component>
</protein>